<sequence length="743" mass="82749">MASNYYSVQIKQCIGLGARNQSRYVKMIHGNIIRALPYPETFLYNNIVHAYALMKSSTYARRVFDRIPQPNLFSWNNLLLAYSKAGLISEMESTFEKLPDRDGVTWNVLIEGYSLSGLVGAAVKAYNTMMRDFSANLTRVTLMTMLKLSSSNGHVSLGKQIHGQVIKLGFESYLLVGSPLLYMYANVGCISDAKKVFYGLDDRNTVMYNSLMGGLLACGMIEDALQLFRGMEKDSVSWAAMIKGLAQNGLAKEAIECFREMKVQGLKMDQYPFGSVLPACGGLGAINEGKQIHACIIRTNFQDHIYVGSALIDMYCKCKCLHYAKTVFDRMKQKNVVSWTAMVVGYGQTGRAEEAVKIFLDMQRSGIDPDHYTLGQAISACANVSSLEEGSQFHGKAITSGLIHYVTVSNSLVTLYGKCGDIDDSTRLFNEMNVRDAVSWTAMVSAYAQFGRAVETIQLFDKMVQHGLKPDGVTLTGVISACSRAGLVEKGQRYFKLMTSEYGIVPSIGHYSCMIDLFSRSGRLEEAMRFINGMPFPPDAIGWTTLLSACRNKGNLEIGKWAAESLIELDPHHPAGYTLLSSIYASKGKWDSVAQLRRGMREKNVKKEPGQSWIKWKGKLHSFSADDESSPYLDQIYAKLEELNNKIIDNGYKPDTSFVHHDVEEAVKVKMLNYHSERLAIAFGLIFVPSGQPIRVGKNLRVCVDCHNATKHISSVTGREILVRDAVRFHRFKDGTCSCGDFW</sequence>
<organism>
    <name type="scientific">Arabidopsis thaliana</name>
    <name type="common">Mouse-ear cress</name>
    <dbReference type="NCBI Taxonomy" id="3702"/>
    <lineage>
        <taxon>Eukaryota</taxon>
        <taxon>Viridiplantae</taxon>
        <taxon>Streptophyta</taxon>
        <taxon>Embryophyta</taxon>
        <taxon>Tracheophyta</taxon>
        <taxon>Spermatophyta</taxon>
        <taxon>Magnoliopsida</taxon>
        <taxon>eudicotyledons</taxon>
        <taxon>Gunneridae</taxon>
        <taxon>Pentapetalae</taxon>
        <taxon>rosids</taxon>
        <taxon>malvids</taxon>
        <taxon>Brassicales</taxon>
        <taxon>Brassicaceae</taxon>
        <taxon>Camelineae</taxon>
        <taxon>Arabidopsis</taxon>
    </lineage>
</organism>
<accession>Q9CAA8</accession>
<dbReference type="EMBL" id="AC011665">
    <property type="protein sequence ID" value="AAG51585.1"/>
    <property type="molecule type" value="Genomic_DNA"/>
</dbReference>
<dbReference type="EMBL" id="CP002684">
    <property type="protein sequence ID" value="AEE34864.1"/>
    <property type="molecule type" value="Genomic_DNA"/>
</dbReference>
<dbReference type="PIR" id="H96713">
    <property type="entry name" value="H96713"/>
</dbReference>
<dbReference type="RefSeq" id="NP_001319351.1">
    <property type="nucleotide sequence ID" value="NM_001334391.1"/>
</dbReference>
<dbReference type="SMR" id="Q9CAA8"/>
<dbReference type="FunCoup" id="Q9CAA8">
    <property type="interactions" value="115"/>
</dbReference>
<dbReference type="PaxDb" id="3702-AT1G68930.1"/>
<dbReference type="EnsemblPlants" id="AT1G68930.1">
    <property type="protein sequence ID" value="AT1G68930.1"/>
    <property type="gene ID" value="AT1G68930"/>
</dbReference>
<dbReference type="GeneID" id="843226"/>
<dbReference type="Gramene" id="AT1G68930.1">
    <property type="protein sequence ID" value="AT1G68930.1"/>
    <property type="gene ID" value="AT1G68930"/>
</dbReference>
<dbReference type="KEGG" id="ath:AT1G68930"/>
<dbReference type="Araport" id="AT1G68930"/>
<dbReference type="TAIR" id="AT1G68930"/>
<dbReference type="eggNOG" id="KOG4197">
    <property type="taxonomic scope" value="Eukaryota"/>
</dbReference>
<dbReference type="HOGENOM" id="CLU_002706_15_5_1"/>
<dbReference type="InParanoid" id="Q9CAA8"/>
<dbReference type="OrthoDB" id="185373at2759"/>
<dbReference type="PhylomeDB" id="Q9CAA8"/>
<dbReference type="PRO" id="PR:Q9CAA8"/>
<dbReference type="Proteomes" id="UP000006548">
    <property type="component" value="Chromosome 1"/>
</dbReference>
<dbReference type="ExpressionAtlas" id="Q9CAA8">
    <property type="expression patterns" value="baseline and differential"/>
</dbReference>
<dbReference type="GO" id="GO:0003723">
    <property type="term" value="F:RNA binding"/>
    <property type="evidence" value="ECO:0007669"/>
    <property type="project" value="InterPro"/>
</dbReference>
<dbReference type="GO" id="GO:0008270">
    <property type="term" value="F:zinc ion binding"/>
    <property type="evidence" value="ECO:0007669"/>
    <property type="project" value="InterPro"/>
</dbReference>
<dbReference type="GO" id="GO:0009451">
    <property type="term" value="P:RNA modification"/>
    <property type="evidence" value="ECO:0007669"/>
    <property type="project" value="InterPro"/>
</dbReference>
<dbReference type="FunFam" id="1.25.40.10:FF:000366">
    <property type="entry name" value="Pentatricopeptide (PPR) repeat-containing protein"/>
    <property type="match status" value="1"/>
</dbReference>
<dbReference type="FunFam" id="1.25.40.10:FF:000284">
    <property type="entry name" value="Pentatricopeptide repeat-containing protein"/>
    <property type="match status" value="1"/>
</dbReference>
<dbReference type="FunFam" id="1.25.40.10:FF:000598">
    <property type="entry name" value="pentatricopeptide repeat-containing protein At1g20230 isoform X2"/>
    <property type="match status" value="1"/>
</dbReference>
<dbReference type="FunFam" id="1.25.40.10:FF:000442">
    <property type="entry name" value="Pentatricopeptide repeat-containing protein At3g49710"/>
    <property type="match status" value="1"/>
</dbReference>
<dbReference type="FunFam" id="1.25.40.10:FF:000472">
    <property type="entry name" value="Putative pentatricopeptide repeat-containing protein"/>
    <property type="match status" value="1"/>
</dbReference>
<dbReference type="Gene3D" id="1.25.40.10">
    <property type="entry name" value="Tetratricopeptide repeat domain"/>
    <property type="match status" value="4"/>
</dbReference>
<dbReference type="InterPro" id="IPR032867">
    <property type="entry name" value="DYW_dom"/>
</dbReference>
<dbReference type="InterPro" id="IPR046848">
    <property type="entry name" value="E_motif"/>
</dbReference>
<dbReference type="InterPro" id="IPR002885">
    <property type="entry name" value="Pentatricopeptide_rpt"/>
</dbReference>
<dbReference type="InterPro" id="IPR046960">
    <property type="entry name" value="PPR_At4g14850-like_plant"/>
</dbReference>
<dbReference type="InterPro" id="IPR011990">
    <property type="entry name" value="TPR-like_helical_dom_sf"/>
</dbReference>
<dbReference type="NCBIfam" id="TIGR00756">
    <property type="entry name" value="PPR"/>
    <property type="match status" value="7"/>
</dbReference>
<dbReference type="PANTHER" id="PTHR47926">
    <property type="entry name" value="PENTATRICOPEPTIDE REPEAT-CONTAINING PROTEIN"/>
    <property type="match status" value="1"/>
</dbReference>
<dbReference type="PANTHER" id="PTHR47926:SF511">
    <property type="entry name" value="PENTATRICOPEPTIDE REPEAT-CONTAINING PROTEIN"/>
    <property type="match status" value="1"/>
</dbReference>
<dbReference type="Pfam" id="PF14432">
    <property type="entry name" value="DYW_deaminase"/>
    <property type="match status" value="1"/>
</dbReference>
<dbReference type="Pfam" id="PF20431">
    <property type="entry name" value="E_motif"/>
    <property type="match status" value="1"/>
</dbReference>
<dbReference type="Pfam" id="PF01535">
    <property type="entry name" value="PPR"/>
    <property type="match status" value="4"/>
</dbReference>
<dbReference type="Pfam" id="PF13041">
    <property type="entry name" value="PPR_2"/>
    <property type="match status" value="3"/>
</dbReference>
<dbReference type="SUPFAM" id="SSF48452">
    <property type="entry name" value="TPR-like"/>
    <property type="match status" value="1"/>
</dbReference>
<dbReference type="PROSITE" id="PS51375">
    <property type="entry name" value="PPR"/>
    <property type="match status" value="16"/>
</dbReference>
<proteinExistence type="inferred from homology"/>
<name>PP108_ARATH</name>
<comment type="similarity">
    <text evidence="1">Belongs to the PPR family. PCMP-H subfamily.</text>
</comment>
<comment type="online information" name="Pentatricopeptide repeat proteins">
    <link uri="https://ppr.plantenergy.uwa.edu.au"/>
</comment>
<feature type="chain" id="PRO_0000342849" description="Putative pentatricopeptide repeat-containing protein At1g68930">
    <location>
        <begin position="1"/>
        <end position="743"/>
    </location>
</feature>
<feature type="repeat" description="PPR 1">
    <location>
        <begin position="40"/>
        <end position="70"/>
    </location>
</feature>
<feature type="repeat" description="PPR 2">
    <location>
        <begin position="71"/>
        <end position="101"/>
    </location>
</feature>
<feature type="repeat" description="PPR 3">
    <location>
        <begin position="102"/>
        <end position="132"/>
    </location>
</feature>
<feature type="repeat" description="PPR 4">
    <location>
        <begin position="138"/>
        <end position="172"/>
    </location>
</feature>
<feature type="repeat" description="PPR 5">
    <location>
        <begin position="173"/>
        <end position="203"/>
    </location>
</feature>
<feature type="repeat" description="PPR 6">
    <location>
        <begin position="204"/>
        <end position="233"/>
    </location>
</feature>
<feature type="repeat" description="PPR 7">
    <location>
        <begin position="234"/>
        <end position="268"/>
    </location>
</feature>
<feature type="repeat" description="PPR 8">
    <location>
        <begin position="269"/>
        <end position="303"/>
    </location>
</feature>
<feature type="repeat" description="PPR 9">
    <location>
        <begin position="304"/>
        <end position="334"/>
    </location>
</feature>
<feature type="repeat" description="PPR 10">
    <location>
        <begin position="335"/>
        <end position="369"/>
    </location>
</feature>
<feature type="repeat" description="PPR 11">
    <location>
        <begin position="370"/>
        <end position="404"/>
    </location>
</feature>
<feature type="repeat" description="PPR 12">
    <location>
        <begin position="405"/>
        <end position="435"/>
    </location>
</feature>
<feature type="repeat" description="PPR 13">
    <location>
        <begin position="436"/>
        <end position="470"/>
    </location>
</feature>
<feature type="repeat" description="PPR 14">
    <location>
        <begin position="471"/>
        <end position="506"/>
    </location>
</feature>
<feature type="repeat" description="PPR 15">
    <location>
        <begin position="507"/>
        <end position="537"/>
    </location>
</feature>
<feature type="region of interest" description="Type E motif">
    <location>
        <begin position="542"/>
        <end position="617"/>
    </location>
</feature>
<feature type="region of interest" description="Type E(+) motif">
    <location>
        <begin position="618"/>
        <end position="648"/>
    </location>
</feature>
<feature type="region of interest" description="Type DYW motif">
    <location>
        <begin position="649"/>
        <end position="743"/>
    </location>
</feature>
<keyword id="KW-1185">Reference proteome</keyword>
<keyword id="KW-0677">Repeat</keyword>
<evidence type="ECO:0000305" key="1"/>
<gene>
    <name type="primary">PCMP-H22</name>
    <name type="ordered locus">At1g68930</name>
    <name type="ORF">T6L1.11</name>
</gene>
<protein>
    <recommendedName>
        <fullName>Putative pentatricopeptide repeat-containing protein At1g68930</fullName>
    </recommendedName>
</protein>
<reference key="1">
    <citation type="journal article" date="2000" name="Nature">
        <title>Sequence and analysis of chromosome 1 of the plant Arabidopsis thaliana.</title>
        <authorList>
            <person name="Theologis A."/>
            <person name="Ecker J.R."/>
            <person name="Palm C.J."/>
            <person name="Federspiel N.A."/>
            <person name="Kaul S."/>
            <person name="White O."/>
            <person name="Alonso J."/>
            <person name="Altafi H."/>
            <person name="Araujo R."/>
            <person name="Bowman C.L."/>
            <person name="Brooks S.Y."/>
            <person name="Buehler E."/>
            <person name="Chan A."/>
            <person name="Chao Q."/>
            <person name="Chen H."/>
            <person name="Cheuk R.F."/>
            <person name="Chin C.W."/>
            <person name="Chung M.K."/>
            <person name="Conn L."/>
            <person name="Conway A.B."/>
            <person name="Conway A.R."/>
            <person name="Creasy T.H."/>
            <person name="Dewar K."/>
            <person name="Dunn P."/>
            <person name="Etgu P."/>
            <person name="Feldblyum T.V."/>
            <person name="Feng J.-D."/>
            <person name="Fong B."/>
            <person name="Fujii C.Y."/>
            <person name="Gill J.E."/>
            <person name="Goldsmith A.D."/>
            <person name="Haas B."/>
            <person name="Hansen N.F."/>
            <person name="Hughes B."/>
            <person name="Huizar L."/>
            <person name="Hunter J.L."/>
            <person name="Jenkins J."/>
            <person name="Johnson-Hopson C."/>
            <person name="Khan S."/>
            <person name="Khaykin E."/>
            <person name="Kim C.J."/>
            <person name="Koo H.L."/>
            <person name="Kremenetskaia I."/>
            <person name="Kurtz D.B."/>
            <person name="Kwan A."/>
            <person name="Lam B."/>
            <person name="Langin-Hooper S."/>
            <person name="Lee A."/>
            <person name="Lee J.M."/>
            <person name="Lenz C.A."/>
            <person name="Li J.H."/>
            <person name="Li Y.-P."/>
            <person name="Lin X."/>
            <person name="Liu S.X."/>
            <person name="Liu Z.A."/>
            <person name="Luros J.S."/>
            <person name="Maiti R."/>
            <person name="Marziali A."/>
            <person name="Militscher J."/>
            <person name="Miranda M."/>
            <person name="Nguyen M."/>
            <person name="Nierman W.C."/>
            <person name="Osborne B.I."/>
            <person name="Pai G."/>
            <person name="Peterson J."/>
            <person name="Pham P.K."/>
            <person name="Rizzo M."/>
            <person name="Rooney T."/>
            <person name="Rowley D."/>
            <person name="Sakano H."/>
            <person name="Salzberg S.L."/>
            <person name="Schwartz J.R."/>
            <person name="Shinn P."/>
            <person name="Southwick A.M."/>
            <person name="Sun H."/>
            <person name="Tallon L.J."/>
            <person name="Tambunga G."/>
            <person name="Toriumi M.J."/>
            <person name="Town C.D."/>
            <person name="Utterback T."/>
            <person name="Van Aken S."/>
            <person name="Vaysberg M."/>
            <person name="Vysotskaia V.S."/>
            <person name="Walker M."/>
            <person name="Wu D."/>
            <person name="Yu G."/>
            <person name="Fraser C.M."/>
            <person name="Venter J.C."/>
            <person name="Davis R.W."/>
        </authorList>
    </citation>
    <scope>NUCLEOTIDE SEQUENCE [LARGE SCALE GENOMIC DNA]</scope>
    <source>
        <strain>cv. Columbia</strain>
    </source>
</reference>
<reference key="2">
    <citation type="journal article" date="2017" name="Plant J.">
        <title>Araport11: a complete reannotation of the Arabidopsis thaliana reference genome.</title>
        <authorList>
            <person name="Cheng C.Y."/>
            <person name="Krishnakumar V."/>
            <person name="Chan A.P."/>
            <person name="Thibaud-Nissen F."/>
            <person name="Schobel S."/>
            <person name="Town C.D."/>
        </authorList>
    </citation>
    <scope>GENOME REANNOTATION</scope>
    <source>
        <strain>cv. Columbia</strain>
    </source>
</reference>
<reference key="3">
    <citation type="journal article" date="2000" name="Plant Mol. Biol.">
        <title>In Arabidopsis thaliana, 1% of the genome codes for a novel protein family unique to plants.</title>
        <authorList>
            <person name="Aubourg S."/>
            <person name="Boudet N."/>
            <person name="Kreis M."/>
            <person name="Lecharny A."/>
        </authorList>
    </citation>
    <scope>GENE FAMILY</scope>
</reference>
<reference key="4">
    <citation type="journal article" date="2004" name="Plant Cell">
        <title>Genome-wide analysis of Arabidopsis pentatricopeptide repeat proteins reveals their essential role in organelle biogenesis.</title>
        <authorList>
            <person name="Lurin C."/>
            <person name="Andres C."/>
            <person name="Aubourg S."/>
            <person name="Bellaoui M."/>
            <person name="Bitton F."/>
            <person name="Bruyere C."/>
            <person name="Caboche M."/>
            <person name="Debast C."/>
            <person name="Gualberto J."/>
            <person name="Hoffmann B."/>
            <person name="Lecharny A."/>
            <person name="Le Ret M."/>
            <person name="Martin-Magniette M.-L."/>
            <person name="Mireau H."/>
            <person name="Peeters N."/>
            <person name="Renou J.-P."/>
            <person name="Szurek B."/>
            <person name="Taconnat L."/>
            <person name="Small I."/>
        </authorList>
    </citation>
    <scope>GENE FAMILY</scope>
</reference>